<keyword id="KW-1185">Reference proteome</keyword>
<keyword id="KW-0732">Signal</keyword>
<proteinExistence type="inferred from homology"/>
<accession>P9WLJ2</accession>
<accession>L0T8V0</accession>
<accession>P64945</accession>
<accession>Q10709</accession>
<feature type="signal peptide" evidence="1">
    <location>
        <begin position="1"/>
        <end position="13"/>
    </location>
</feature>
<feature type="chain" id="PRO_0000427469" description="Uncharacterized protein MT2160">
    <location>
        <begin position="14"/>
        <end position="550"/>
    </location>
</feature>
<feature type="region of interest" description="Disordered" evidence="2">
    <location>
        <begin position="312"/>
        <end position="358"/>
    </location>
</feature>
<sequence length="550" mass="58935">MAGALFEPSFAAAHPAGLLRRPVTRTVVLSVAATSIAHMFEISLPDPTELCRSDDGALVAAIEDCARVEAAASARRLSAIAELTGRRTGADQRADWACDFWDCAAAEVAAALTISHGKASGQMHLSLALNRLPQVAALFLAGHLGARLFSIIAWRTYLVRDPHALSLLDAALAEHAGAWGPLSAPKLEKAIDSWIDRYDPGALRRSRISARTRDLCIGDPDEDAGTAALWGRLYATDAAMLDRRLTEMAHGVCEDDPRTLAQRRADALGALAAGADHLACGCGKPDCPSGAGNDERAAGVVIHVVADASALDAQPDPHLSGDEPPSRPLTPETTLFEALTPDPEPDPPATHAPAELITTGGGVVPAPLLAELIRGGATISQVRHPGDLAAEPHYRPSAKLAEFVRMRDLTCRFPGCDVPAEFCDIDHSAPWPLGPTHPSNLKCACRKHHLLKTFWTGWRDVQLPDGTVIWTAPNGHTYTTHPGSRIFFPTWHTTTAELPQTSTAAVNVDARGLMMPRRRRTRAAELAHRINAERALNDAYMAERNKPPSF</sequence>
<organism>
    <name type="scientific">Mycobacterium tuberculosis (strain CDC 1551 / Oshkosh)</name>
    <dbReference type="NCBI Taxonomy" id="83331"/>
    <lineage>
        <taxon>Bacteria</taxon>
        <taxon>Bacillati</taxon>
        <taxon>Actinomycetota</taxon>
        <taxon>Actinomycetes</taxon>
        <taxon>Mycobacteriales</taxon>
        <taxon>Mycobacteriaceae</taxon>
        <taxon>Mycobacterium</taxon>
        <taxon>Mycobacterium tuberculosis complex</taxon>
    </lineage>
</organism>
<comment type="similarity">
    <text evidence="3">To M.tuberculosis Rv3776.</text>
</comment>
<comment type="sequence caution" evidence="3">
    <conflict type="erroneous initiation">
        <sequence resource="EMBL-CDS" id="AAK46441"/>
    </conflict>
</comment>
<reference key="1">
    <citation type="journal article" date="2002" name="J. Bacteriol.">
        <title>Whole-genome comparison of Mycobacterium tuberculosis clinical and laboratory strains.</title>
        <authorList>
            <person name="Fleischmann R.D."/>
            <person name="Alland D."/>
            <person name="Eisen J.A."/>
            <person name="Carpenter L."/>
            <person name="White O."/>
            <person name="Peterson J.D."/>
            <person name="DeBoy R.T."/>
            <person name="Dodson R.J."/>
            <person name="Gwinn M.L."/>
            <person name="Haft D.H."/>
            <person name="Hickey E.K."/>
            <person name="Kolonay J.F."/>
            <person name="Nelson W.C."/>
            <person name="Umayam L.A."/>
            <person name="Ermolaeva M.D."/>
            <person name="Salzberg S.L."/>
            <person name="Delcher A."/>
            <person name="Utterback T.R."/>
            <person name="Weidman J.F."/>
            <person name="Khouri H.M."/>
            <person name="Gill J."/>
            <person name="Mikula A."/>
            <person name="Bishai W."/>
            <person name="Jacobs W.R. Jr."/>
            <person name="Venter J.C."/>
            <person name="Fraser C.M."/>
        </authorList>
    </citation>
    <scope>NUCLEOTIDE SEQUENCE [LARGE SCALE GENOMIC DNA]</scope>
    <source>
        <strain>CDC 1551 / Oshkosh</strain>
    </source>
</reference>
<protein>
    <recommendedName>
        <fullName>Uncharacterized protein MT2160</fullName>
    </recommendedName>
</protein>
<gene>
    <name type="ordered locus">MT2160</name>
</gene>
<dbReference type="EMBL" id="AE000516">
    <property type="protein sequence ID" value="AAK46441.1"/>
    <property type="status" value="ALT_INIT"/>
    <property type="molecule type" value="Genomic_DNA"/>
</dbReference>
<dbReference type="PIR" id="G70768">
    <property type="entry name" value="G70768"/>
</dbReference>
<dbReference type="KEGG" id="mtc:MT2160"/>
<dbReference type="PATRIC" id="fig|83331.31.peg.2330"/>
<dbReference type="HOGENOM" id="CLU_021786_3_2_11"/>
<dbReference type="Proteomes" id="UP000001020">
    <property type="component" value="Chromosome"/>
</dbReference>
<dbReference type="CDD" id="cd00085">
    <property type="entry name" value="HNHc"/>
    <property type="match status" value="1"/>
</dbReference>
<dbReference type="InterPro" id="IPR003870">
    <property type="entry name" value="DUF222"/>
</dbReference>
<dbReference type="InterPro" id="IPR003615">
    <property type="entry name" value="HNH_nuc"/>
</dbReference>
<dbReference type="Pfam" id="PF02720">
    <property type="entry name" value="DUF222"/>
    <property type="match status" value="1"/>
</dbReference>
<dbReference type="SMART" id="SM00507">
    <property type="entry name" value="HNHc"/>
    <property type="match status" value="1"/>
</dbReference>
<name>Y2100_MYCTO</name>
<evidence type="ECO:0000255" key="1"/>
<evidence type="ECO:0000256" key="2">
    <source>
        <dbReference type="SAM" id="MobiDB-lite"/>
    </source>
</evidence>
<evidence type="ECO:0000305" key="3"/>